<organism>
    <name type="scientific">Escherichia coli O8 (strain IAI1)</name>
    <dbReference type="NCBI Taxonomy" id="585034"/>
    <lineage>
        <taxon>Bacteria</taxon>
        <taxon>Pseudomonadati</taxon>
        <taxon>Pseudomonadota</taxon>
        <taxon>Gammaproteobacteria</taxon>
        <taxon>Enterobacterales</taxon>
        <taxon>Enterobacteriaceae</taxon>
        <taxon>Escherichia</taxon>
    </lineage>
</organism>
<gene>
    <name evidence="1" type="primary">deoB</name>
    <name type="ordered locus">ECIAI1_4606</name>
</gene>
<comment type="function">
    <text evidence="1">Isomerase that catalyzes the conversion of deoxy-ribose 1-phosphate (dRib-1-P) and ribose 1-phosphate (Rib-1-P) to deoxy-ribose 5-phosphate (dRib-5-P) and ribose 5-phosphate (Rib-5-P), respectively.</text>
</comment>
<comment type="catalytic activity">
    <reaction evidence="1">
        <text>2-deoxy-alpha-D-ribose 1-phosphate = 2-deoxy-D-ribose 5-phosphate</text>
        <dbReference type="Rhea" id="RHEA:27658"/>
        <dbReference type="ChEBI" id="CHEBI:57259"/>
        <dbReference type="ChEBI" id="CHEBI:62877"/>
        <dbReference type="EC" id="5.4.2.7"/>
    </reaction>
</comment>
<comment type="catalytic activity">
    <reaction evidence="1">
        <text>alpha-D-ribose 1-phosphate = D-ribose 5-phosphate</text>
        <dbReference type="Rhea" id="RHEA:18793"/>
        <dbReference type="ChEBI" id="CHEBI:57720"/>
        <dbReference type="ChEBI" id="CHEBI:78346"/>
        <dbReference type="EC" id="5.4.2.7"/>
    </reaction>
</comment>
<comment type="cofactor">
    <cofactor evidence="1">
        <name>Mn(2+)</name>
        <dbReference type="ChEBI" id="CHEBI:29035"/>
    </cofactor>
    <text evidence="1">Binds 2 manganese ions.</text>
</comment>
<comment type="pathway">
    <text evidence="1">Carbohydrate degradation; 2-deoxy-D-ribose 1-phosphate degradation; D-glyceraldehyde 3-phosphate and acetaldehyde from 2-deoxy-alpha-D-ribose 1-phosphate: step 1/2.</text>
</comment>
<comment type="subcellular location">
    <subcellularLocation>
        <location evidence="1">Cytoplasm</location>
    </subcellularLocation>
</comment>
<comment type="similarity">
    <text evidence="1">Belongs to the phosphopentomutase family.</text>
</comment>
<reference key="1">
    <citation type="journal article" date="2009" name="PLoS Genet.">
        <title>Organised genome dynamics in the Escherichia coli species results in highly diverse adaptive paths.</title>
        <authorList>
            <person name="Touchon M."/>
            <person name="Hoede C."/>
            <person name="Tenaillon O."/>
            <person name="Barbe V."/>
            <person name="Baeriswyl S."/>
            <person name="Bidet P."/>
            <person name="Bingen E."/>
            <person name="Bonacorsi S."/>
            <person name="Bouchier C."/>
            <person name="Bouvet O."/>
            <person name="Calteau A."/>
            <person name="Chiapello H."/>
            <person name="Clermont O."/>
            <person name="Cruveiller S."/>
            <person name="Danchin A."/>
            <person name="Diard M."/>
            <person name="Dossat C."/>
            <person name="Karoui M.E."/>
            <person name="Frapy E."/>
            <person name="Garry L."/>
            <person name="Ghigo J.M."/>
            <person name="Gilles A.M."/>
            <person name="Johnson J."/>
            <person name="Le Bouguenec C."/>
            <person name="Lescat M."/>
            <person name="Mangenot S."/>
            <person name="Martinez-Jehanne V."/>
            <person name="Matic I."/>
            <person name="Nassif X."/>
            <person name="Oztas S."/>
            <person name="Petit M.A."/>
            <person name="Pichon C."/>
            <person name="Rouy Z."/>
            <person name="Ruf C.S."/>
            <person name="Schneider D."/>
            <person name="Tourret J."/>
            <person name="Vacherie B."/>
            <person name="Vallenet D."/>
            <person name="Medigue C."/>
            <person name="Rocha E.P.C."/>
            <person name="Denamur E."/>
        </authorList>
    </citation>
    <scope>NUCLEOTIDE SEQUENCE [LARGE SCALE GENOMIC DNA]</scope>
    <source>
        <strain>IAI1</strain>
    </source>
</reference>
<feature type="chain" id="PRO_1000133071" description="Phosphopentomutase">
    <location>
        <begin position="1"/>
        <end position="407"/>
    </location>
</feature>
<feature type="binding site" evidence="1">
    <location>
        <position position="10"/>
    </location>
    <ligand>
        <name>Mn(2+)</name>
        <dbReference type="ChEBI" id="CHEBI:29035"/>
        <label>1</label>
    </ligand>
</feature>
<feature type="binding site" evidence="1">
    <location>
        <position position="306"/>
    </location>
    <ligand>
        <name>Mn(2+)</name>
        <dbReference type="ChEBI" id="CHEBI:29035"/>
        <label>2</label>
    </ligand>
</feature>
<feature type="binding site" evidence="1">
    <location>
        <position position="311"/>
    </location>
    <ligand>
        <name>Mn(2+)</name>
        <dbReference type="ChEBI" id="CHEBI:29035"/>
        <label>2</label>
    </ligand>
</feature>
<feature type="binding site" evidence="1">
    <location>
        <position position="347"/>
    </location>
    <ligand>
        <name>Mn(2+)</name>
        <dbReference type="ChEBI" id="CHEBI:29035"/>
        <label>1</label>
    </ligand>
</feature>
<feature type="binding site" evidence="1">
    <location>
        <position position="348"/>
    </location>
    <ligand>
        <name>Mn(2+)</name>
        <dbReference type="ChEBI" id="CHEBI:29035"/>
        <label>1</label>
    </ligand>
</feature>
<feature type="binding site" evidence="1">
    <location>
        <position position="359"/>
    </location>
    <ligand>
        <name>Mn(2+)</name>
        <dbReference type="ChEBI" id="CHEBI:29035"/>
        <label>2</label>
    </ligand>
</feature>
<accession>B7LXU5</accession>
<keyword id="KW-0963">Cytoplasm</keyword>
<keyword id="KW-0413">Isomerase</keyword>
<keyword id="KW-0464">Manganese</keyword>
<keyword id="KW-0479">Metal-binding</keyword>
<sequence>MKRAFIMVLDSFGIGATEDAERFGDVGADTLGHIAEACAKGEADNGRKGPLNLPNLTRLGLAKAHEGSTGFIPAGMDGNAEVIGAYAWAHEMSSGKDTPSGHWEIAGVPVLFEWGYFSDHENSFPQELLDKLVERANLPGYLGNCHSSGTVILDQLGEEHMKTGKPIFYTSADSVFQIACHEETFGLDKLYELCEIAREELTNGGYNIGRVIARPFIGDKAGNFQRTGNRHDLAVEPPAPTVLQKLVDEKHGQVVSVGKIADIYANCGITKKVKATGLDALFDATIKEMKEAGDNTIVFTNFVDFDSSWGHRRDVAGYAAGLELFDRRLPELMSLLRDDDILILTADHGCDPTWTGTDHTREHIPVLVYGPKVKPGSLGHRETFADIGQTLAKYFGTSDMEYGKAMF</sequence>
<protein>
    <recommendedName>
        <fullName evidence="1">Phosphopentomutase</fullName>
        <ecNumber evidence="1">5.4.2.7</ecNumber>
    </recommendedName>
    <alternativeName>
        <fullName evidence="1">Phosphodeoxyribomutase</fullName>
    </alternativeName>
</protein>
<name>DEOB_ECO8A</name>
<evidence type="ECO:0000255" key="1">
    <source>
        <dbReference type="HAMAP-Rule" id="MF_00740"/>
    </source>
</evidence>
<proteinExistence type="inferred from homology"/>
<dbReference type="EC" id="5.4.2.7" evidence="1"/>
<dbReference type="EMBL" id="CU928160">
    <property type="protein sequence ID" value="CAR01346.1"/>
    <property type="molecule type" value="Genomic_DNA"/>
</dbReference>
<dbReference type="RefSeq" id="WP_000816471.1">
    <property type="nucleotide sequence ID" value="NC_011741.1"/>
</dbReference>
<dbReference type="SMR" id="B7LXU5"/>
<dbReference type="GeneID" id="89519362"/>
<dbReference type="KEGG" id="ecr:ECIAI1_4606"/>
<dbReference type="HOGENOM" id="CLU_053861_0_0_6"/>
<dbReference type="UniPathway" id="UPA00002">
    <property type="reaction ID" value="UER00467"/>
</dbReference>
<dbReference type="GO" id="GO:0005829">
    <property type="term" value="C:cytosol"/>
    <property type="evidence" value="ECO:0007669"/>
    <property type="project" value="TreeGrafter"/>
</dbReference>
<dbReference type="GO" id="GO:0000287">
    <property type="term" value="F:magnesium ion binding"/>
    <property type="evidence" value="ECO:0007669"/>
    <property type="project" value="InterPro"/>
</dbReference>
<dbReference type="GO" id="GO:0030145">
    <property type="term" value="F:manganese ion binding"/>
    <property type="evidence" value="ECO:0007669"/>
    <property type="project" value="UniProtKB-UniRule"/>
</dbReference>
<dbReference type="GO" id="GO:0008973">
    <property type="term" value="F:phosphopentomutase activity"/>
    <property type="evidence" value="ECO:0007669"/>
    <property type="project" value="UniProtKB-UniRule"/>
</dbReference>
<dbReference type="GO" id="GO:0006018">
    <property type="term" value="P:2-deoxyribose 1-phosphate catabolic process"/>
    <property type="evidence" value="ECO:0007669"/>
    <property type="project" value="UniProtKB-UniRule"/>
</dbReference>
<dbReference type="GO" id="GO:0006015">
    <property type="term" value="P:5-phosphoribose 1-diphosphate biosynthetic process"/>
    <property type="evidence" value="ECO:0007669"/>
    <property type="project" value="UniProtKB-UniPathway"/>
</dbReference>
<dbReference type="GO" id="GO:0043094">
    <property type="term" value="P:metabolic compound salvage"/>
    <property type="evidence" value="ECO:0007669"/>
    <property type="project" value="InterPro"/>
</dbReference>
<dbReference type="GO" id="GO:0009117">
    <property type="term" value="P:nucleotide metabolic process"/>
    <property type="evidence" value="ECO:0007669"/>
    <property type="project" value="InterPro"/>
</dbReference>
<dbReference type="CDD" id="cd16009">
    <property type="entry name" value="PPM"/>
    <property type="match status" value="1"/>
</dbReference>
<dbReference type="FunFam" id="3.30.70.1250:FF:000001">
    <property type="entry name" value="Phosphopentomutase"/>
    <property type="match status" value="1"/>
</dbReference>
<dbReference type="Gene3D" id="3.40.720.10">
    <property type="entry name" value="Alkaline Phosphatase, subunit A"/>
    <property type="match status" value="1"/>
</dbReference>
<dbReference type="Gene3D" id="3.30.70.1250">
    <property type="entry name" value="Phosphopentomutase"/>
    <property type="match status" value="1"/>
</dbReference>
<dbReference type="HAMAP" id="MF_00740">
    <property type="entry name" value="Phosphopentomut"/>
    <property type="match status" value="1"/>
</dbReference>
<dbReference type="InterPro" id="IPR017850">
    <property type="entry name" value="Alkaline_phosphatase_core_sf"/>
</dbReference>
<dbReference type="InterPro" id="IPR010045">
    <property type="entry name" value="DeoB"/>
</dbReference>
<dbReference type="InterPro" id="IPR006124">
    <property type="entry name" value="Metalloenzyme"/>
</dbReference>
<dbReference type="InterPro" id="IPR024052">
    <property type="entry name" value="Phosphopentomutase_DeoB_cap_sf"/>
</dbReference>
<dbReference type="NCBIfam" id="TIGR01696">
    <property type="entry name" value="deoB"/>
    <property type="match status" value="1"/>
</dbReference>
<dbReference type="NCBIfam" id="NF003766">
    <property type="entry name" value="PRK05362.1"/>
    <property type="match status" value="1"/>
</dbReference>
<dbReference type="PANTHER" id="PTHR21110">
    <property type="entry name" value="PHOSPHOPENTOMUTASE"/>
    <property type="match status" value="1"/>
</dbReference>
<dbReference type="PANTHER" id="PTHR21110:SF0">
    <property type="entry name" value="PHOSPHOPENTOMUTASE"/>
    <property type="match status" value="1"/>
</dbReference>
<dbReference type="Pfam" id="PF01676">
    <property type="entry name" value="Metalloenzyme"/>
    <property type="match status" value="1"/>
</dbReference>
<dbReference type="PIRSF" id="PIRSF001491">
    <property type="entry name" value="Ppentomutase"/>
    <property type="match status" value="1"/>
</dbReference>
<dbReference type="SUPFAM" id="SSF53649">
    <property type="entry name" value="Alkaline phosphatase-like"/>
    <property type="match status" value="1"/>
</dbReference>
<dbReference type="SUPFAM" id="SSF143856">
    <property type="entry name" value="DeoB insert domain-like"/>
    <property type="match status" value="1"/>
</dbReference>